<gene>
    <name evidence="1" type="primary">murI</name>
    <name type="ordered locus">SpyM51555</name>
</gene>
<keyword id="KW-0133">Cell shape</keyword>
<keyword id="KW-0961">Cell wall biogenesis/degradation</keyword>
<keyword id="KW-0413">Isomerase</keyword>
<keyword id="KW-0573">Peptidoglycan synthesis</keyword>
<accession>A2RG97</accession>
<comment type="function">
    <text evidence="1">Provides the (R)-glutamate required for cell wall biosynthesis.</text>
</comment>
<comment type="catalytic activity">
    <reaction evidence="1">
        <text>L-glutamate = D-glutamate</text>
        <dbReference type="Rhea" id="RHEA:12813"/>
        <dbReference type="ChEBI" id="CHEBI:29985"/>
        <dbReference type="ChEBI" id="CHEBI:29986"/>
        <dbReference type="EC" id="5.1.1.3"/>
    </reaction>
</comment>
<comment type="pathway">
    <text evidence="1">Cell wall biogenesis; peptidoglycan biosynthesis.</text>
</comment>
<comment type="similarity">
    <text evidence="1">Belongs to the aspartate/glutamate racemases family.</text>
</comment>
<feature type="chain" id="PRO_1000047626" description="Glutamate racemase">
    <location>
        <begin position="1"/>
        <end position="264"/>
    </location>
</feature>
<feature type="active site" description="Proton donor/acceptor" evidence="1">
    <location>
        <position position="73"/>
    </location>
</feature>
<feature type="active site" description="Proton donor/acceptor" evidence="1">
    <location>
        <position position="183"/>
    </location>
</feature>
<feature type="binding site" evidence="1">
    <location>
        <begin position="10"/>
        <end position="11"/>
    </location>
    <ligand>
        <name>substrate</name>
    </ligand>
</feature>
<feature type="binding site" evidence="1">
    <location>
        <begin position="42"/>
        <end position="43"/>
    </location>
    <ligand>
        <name>substrate</name>
    </ligand>
</feature>
<feature type="binding site" evidence="1">
    <location>
        <begin position="74"/>
        <end position="75"/>
    </location>
    <ligand>
        <name>substrate</name>
    </ligand>
</feature>
<feature type="binding site" evidence="1">
    <location>
        <begin position="184"/>
        <end position="185"/>
    </location>
    <ligand>
        <name>substrate</name>
    </ligand>
</feature>
<name>MURI_STRPG</name>
<proteinExistence type="inferred from homology"/>
<dbReference type="EC" id="5.1.1.3" evidence="1"/>
<dbReference type="EMBL" id="AM295007">
    <property type="protein sequence ID" value="CAM30876.1"/>
    <property type="molecule type" value="Genomic_DNA"/>
</dbReference>
<dbReference type="SMR" id="A2RG97"/>
<dbReference type="KEGG" id="spf:SpyM51555"/>
<dbReference type="HOGENOM" id="CLU_052344_0_2_9"/>
<dbReference type="UniPathway" id="UPA00219"/>
<dbReference type="GO" id="GO:0008881">
    <property type="term" value="F:glutamate racemase activity"/>
    <property type="evidence" value="ECO:0007669"/>
    <property type="project" value="UniProtKB-UniRule"/>
</dbReference>
<dbReference type="GO" id="GO:0071555">
    <property type="term" value="P:cell wall organization"/>
    <property type="evidence" value="ECO:0007669"/>
    <property type="project" value="UniProtKB-KW"/>
</dbReference>
<dbReference type="GO" id="GO:0009252">
    <property type="term" value="P:peptidoglycan biosynthetic process"/>
    <property type="evidence" value="ECO:0007669"/>
    <property type="project" value="UniProtKB-UniRule"/>
</dbReference>
<dbReference type="GO" id="GO:0008360">
    <property type="term" value="P:regulation of cell shape"/>
    <property type="evidence" value="ECO:0007669"/>
    <property type="project" value="UniProtKB-KW"/>
</dbReference>
<dbReference type="FunFam" id="3.40.50.1860:FF:000002">
    <property type="entry name" value="Glutamate racemase"/>
    <property type="match status" value="1"/>
</dbReference>
<dbReference type="Gene3D" id="3.40.50.1860">
    <property type="match status" value="2"/>
</dbReference>
<dbReference type="HAMAP" id="MF_00258">
    <property type="entry name" value="Glu_racemase"/>
    <property type="match status" value="1"/>
</dbReference>
<dbReference type="InterPro" id="IPR015942">
    <property type="entry name" value="Asp/Glu/hydantoin_racemase"/>
</dbReference>
<dbReference type="InterPro" id="IPR001920">
    <property type="entry name" value="Asp/Glu_race"/>
</dbReference>
<dbReference type="InterPro" id="IPR033134">
    <property type="entry name" value="Asp/Glu_racemase_AS_2"/>
</dbReference>
<dbReference type="InterPro" id="IPR004391">
    <property type="entry name" value="Glu_race"/>
</dbReference>
<dbReference type="NCBIfam" id="TIGR00067">
    <property type="entry name" value="glut_race"/>
    <property type="match status" value="1"/>
</dbReference>
<dbReference type="NCBIfam" id="NF002035">
    <property type="entry name" value="PRK00865.1-3"/>
    <property type="match status" value="1"/>
</dbReference>
<dbReference type="PANTHER" id="PTHR21198">
    <property type="entry name" value="GLUTAMATE RACEMASE"/>
    <property type="match status" value="1"/>
</dbReference>
<dbReference type="PANTHER" id="PTHR21198:SF2">
    <property type="entry name" value="GLUTAMATE RACEMASE"/>
    <property type="match status" value="1"/>
</dbReference>
<dbReference type="Pfam" id="PF01177">
    <property type="entry name" value="Asp_Glu_race"/>
    <property type="match status" value="1"/>
</dbReference>
<dbReference type="SUPFAM" id="SSF53681">
    <property type="entry name" value="Aspartate/glutamate racemase"/>
    <property type="match status" value="2"/>
</dbReference>
<dbReference type="PROSITE" id="PS00924">
    <property type="entry name" value="ASP_GLU_RACEMASE_2"/>
    <property type="match status" value="1"/>
</dbReference>
<organism>
    <name type="scientific">Streptococcus pyogenes serotype M5 (strain Manfredo)</name>
    <dbReference type="NCBI Taxonomy" id="160491"/>
    <lineage>
        <taxon>Bacteria</taxon>
        <taxon>Bacillati</taxon>
        <taxon>Bacillota</taxon>
        <taxon>Bacilli</taxon>
        <taxon>Lactobacillales</taxon>
        <taxon>Streptococcaceae</taxon>
        <taxon>Streptococcus</taxon>
    </lineage>
</organism>
<evidence type="ECO:0000255" key="1">
    <source>
        <dbReference type="HAMAP-Rule" id="MF_00258"/>
    </source>
</evidence>
<reference key="1">
    <citation type="journal article" date="2007" name="J. Bacteriol.">
        <title>Complete genome of acute rheumatic fever-associated serotype M5 Streptococcus pyogenes strain Manfredo.</title>
        <authorList>
            <person name="Holden M.T.G."/>
            <person name="Scott A."/>
            <person name="Cherevach I."/>
            <person name="Chillingworth T."/>
            <person name="Churcher C."/>
            <person name="Cronin A."/>
            <person name="Dowd L."/>
            <person name="Feltwell T."/>
            <person name="Hamlin N."/>
            <person name="Holroyd S."/>
            <person name="Jagels K."/>
            <person name="Moule S."/>
            <person name="Mungall K."/>
            <person name="Quail M.A."/>
            <person name="Price C."/>
            <person name="Rabbinowitsch E."/>
            <person name="Sharp S."/>
            <person name="Skelton J."/>
            <person name="Whitehead S."/>
            <person name="Barrell B.G."/>
            <person name="Kehoe M."/>
            <person name="Parkhill J."/>
        </authorList>
    </citation>
    <scope>NUCLEOTIDE SEQUENCE [LARGE SCALE GENOMIC DNA]</scope>
    <source>
        <strain>Manfredo</strain>
    </source>
</reference>
<protein>
    <recommendedName>
        <fullName evidence="1">Glutamate racemase</fullName>
        <ecNumber evidence="1">5.1.1.3</ecNumber>
    </recommendedName>
</protein>
<sequence length="264" mass="29018">MDTRPIGFLDSGVGGLTVVCELIRQLPHEKIVYIGDSARAPYGPRPKKQIKEYTWELVNFLLTQNVKMIVFACNTATAVAWEEVKAALDIPVLGVVLPGASAAIKSTTKGQVGVIGTPMTVASDIYRKKIQLLAPSVQVRSLACPKFVPIVESNEMCSSIAKKIVYDSLSPLVGKIDTLVLGCTHYPLLRPIIQNVMGPSVKLIDSGAECVRDISVLLNYFDINGNYHQKAVEHRFFTTANPEIFQEIASIWLKQKINVEHVTL</sequence>